<sequence>MAINSSHHFCPMTTTTTTSAKFVDSLGSSFCKFHGTSSSISLRSYRFGFSFMKNVKRLSCEGSSSSSSSRNENWNRTQKQNQFRPSKVVLNRRKDERFSDLGVISGENSSRSGDVGGGSGSSSTMEKIVEKLKKYGFVDEDQFQDKEVEQERRIEKSSVEERFYVEERRGGFSEESPFGVYGGNDEVKFPWEKVSSMEKKELVNGEWTAKKESRYSLAEMTLSEFELNRLRNVMFRTKSKMRVTGAGVTQAVVDAIQEKWKGSEIVRLKIEGSSALNMRRMHEILERKTGGLVIWRSGTSIALYNYKGGSNRDGSGNMNKQVYRRAERLPSSLPTSTVDQSVQLVNLPQLEKEPTVVGNKDRTSPQEVEYEDEINELLEGLGPRYTDWQGGYPLPVDADLLPGIVPGYEPPFRALPYGVRSTLGTKEATSLRRIATVLPPHFALGRSRQLQGLATAMVKLWQKSLIAKVALKRGVQLTTSERMAEDIKRLTGGMLLSRNKDFLVFYRGKSFLSLEVGEALMEKEMLVRTLQDEEEQARLRASSALVVPSIKANQQLARTLQDKEEQARPSALVLPSTKANQNLVSAGTLGETLDATGKWGKNLDNDDHVEEMKQEVEKVRSAKLVRKLERKLAFAEKKLLKAERALAKVEESLKPAEQRTDLEGITEEERFMFQKLGLKMKAFLLLGRRGVFDGTVENMHLHWKYRELIKILVKAKTLEGAQKVAMALEAESGGILVSVDKISKGYAVIVYRGKDYKRPTTLRPKNLLTKRKALARSLELQKREALIKHIEAIQTRSEQLRAEIEQVELVKDKGDETLYDKLDMAYSSDEETEETDGEEDDVYLDTYEDEGEDDEEGGIQANGSLSETDVEFGSDESDTDFGDNSASSTTPETTFVELQNEELDVQP</sequence>
<protein>
    <recommendedName>
        <fullName evidence="9">CRM-domain containing factor CFM3B, chloroplastic</fullName>
    </recommendedName>
    <alternativeName>
        <fullName evidence="7">Protein CRM FAMILY MEMBER 3B</fullName>
        <shortName evidence="7">AtCFM3b</shortName>
    </alternativeName>
    <alternativeName>
        <fullName evidence="8">Protein SUPPRESSOR OF RFC THREE 2</fullName>
    </alternativeName>
</protein>
<dbReference type="EMBL" id="Z97336">
    <property type="protein sequence ID" value="CAB10230.1"/>
    <property type="status" value="ALT_SEQ"/>
    <property type="molecule type" value="Genomic_DNA"/>
</dbReference>
<dbReference type="EMBL" id="AL161539">
    <property type="protein sequence ID" value="CAB78493.1"/>
    <property type="status" value="ALT_SEQ"/>
    <property type="molecule type" value="Genomic_DNA"/>
</dbReference>
<dbReference type="EMBL" id="CP002687">
    <property type="protein sequence ID" value="AEE83453.1"/>
    <property type="molecule type" value="Genomic_DNA"/>
</dbReference>
<dbReference type="PIR" id="D71407">
    <property type="entry name" value="D71407"/>
</dbReference>
<dbReference type="RefSeq" id="NP_193187.3">
    <property type="nucleotide sequence ID" value="NM_117531.4"/>
</dbReference>
<dbReference type="SMR" id="F4JVH1"/>
<dbReference type="FunCoup" id="F4JVH1">
    <property type="interactions" value="1166"/>
</dbReference>
<dbReference type="STRING" id="3702.F4JVH1"/>
<dbReference type="PaxDb" id="3702-AT4G14510.1"/>
<dbReference type="ProteomicsDB" id="241230"/>
<dbReference type="EnsemblPlants" id="AT4G14510.1">
    <property type="protein sequence ID" value="AT4G14510.1"/>
    <property type="gene ID" value="AT4G14510"/>
</dbReference>
<dbReference type="GeneID" id="827098"/>
<dbReference type="Gramene" id="AT4G14510.1">
    <property type="protein sequence ID" value="AT4G14510.1"/>
    <property type="gene ID" value="AT4G14510"/>
</dbReference>
<dbReference type="KEGG" id="ath:AT4G14510"/>
<dbReference type="Araport" id="AT4G14510"/>
<dbReference type="TAIR" id="AT4G14510">
    <property type="gene designation" value="CFM3B"/>
</dbReference>
<dbReference type="eggNOG" id="KOG1990">
    <property type="taxonomic scope" value="Eukaryota"/>
</dbReference>
<dbReference type="HOGENOM" id="CLU_006310_3_0_1"/>
<dbReference type="InParanoid" id="F4JVH1"/>
<dbReference type="OMA" id="SRNENWN"/>
<dbReference type="PRO" id="PR:F4JVH1"/>
<dbReference type="Proteomes" id="UP000006548">
    <property type="component" value="Chromosome 4"/>
</dbReference>
<dbReference type="ExpressionAtlas" id="F4JVH1">
    <property type="expression patterns" value="baseline and differential"/>
</dbReference>
<dbReference type="GO" id="GO:0009507">
    <property type="term" value="C:chloroplast"/>
    <property type="evidence" value="ECO:0000314"/>
    <property type="project" value="UniProtKB"/>
</dbReference>
<dbReference type="GO" id="GO:0009536">
    <property type="term" value="C:plastid"/>
    <property type="evidence" value="ECO:0000314"/>
    <property type="project" value="UniProtKB"/>
</dbReference>
<dbReference type="GO" id="GO:1990904">
    <property type="term" value="C:ribonucleoprotein complex"/>
    <property type="evidence" value="ECO:0007669"/>
    <property type="project" value="UniProtKB-KW"/>
</dbReference>
<dbReference type="GO" id="GO:0003729">
    <property type="term" value="F:mRNA binding"/>
    <property type="evidence" value="ECO:0000314"/>
    <property type="project" value="TAIR"/>
</dbReference>
<dbReference type="GO" id="GO:0000373">
    <property type="term" value="P:Group II intron splicing"/>
    <property type="evidence" value="ECO:0000315"/>
    <property type="project" value="UniProtKB"/>
</dbReference>
<dbReference type="GO" id="GO:0006397">
    <property type="term" value="P:mRNA processing"/>
    <property type="evidence" value="ECO:0007669"/>
    <property type="project" value="UniProtKB-KW"/>
</dbReference>
<dbReference type="GO" id="GO:0042794">
    <property type="term" value="P:plastid rRNA transcription"/>
    <property type="evidence" value="ECO:0000315"/>
    <property type="project" value="UniProtKB"/>
</dbReference>
<dbReference type="GO" id="GO:0008380">
    <property type="term" value="P:RNA splicing"/>
    <property type="evidence" value="ECO:0000315"/>
    <property type="project" value="UniProtKB"/>
</dbReference>
<dbReference type="GO" id="GO:0006364">
    <property type="term" value="P:rRNA processing"/>
    <property type="evidence" value="ECO:0000315"/>
    <property type="project" value="UniProtKB"/>
</dbReference>
<dbReference type="GO" id="GO:0048316">
    <property type="term" value="P:seed development"/>
    <property type="evidence" value="ECO:0000315"/>
    <property type="project" value="UniProtKB"/>
</dbReference>
<dbReference type="FunFam" id="3.30.110.60:FF:000003">
    <property type="entry name" value="CRM-domain containing factor CFM3B, chloroplastic"/>
    <property type="match status" value="1"/>
</dbReference>
<dbReference type="FunFam" id="3.30.110.60:FF:000002">
    <property type="entry name" value="CRS2-associated factor 1, chloroplastic"/>
    <property type="match status" value="2"/>
</dbReference>
<dbReference type="Gene3D" id="3.30.110.60">
    <property type="entry name" value="YhbY-like"/>
    <property type="match status" value="3"/>
</dbReference>
<dbReference type="InterPro" id="IPR045278">
    <property type="entry name" value="CRS1/CFM2/CFM3"/>
</dbReference>
<dbReference type="InterPro" id="IPR001890">
    <property type="entry name" value="RNA-binding_CRM"/>
</dbReference>
<dbReference type="InterPro" id="IPR035920">
    <property type="entry name" value="YhbY-like_sf"/>
</dbReference>
<dbReference type="PANTHER" id="PTHR31846:SF18">
    <property type="entry name" value="CRM-DOMAIN CONTAINING FACTOR CFM3B, CHLOROPLASTIC"/>
    <property type="match status" value="1"/>
</dbReference>
<dbReference type="PANTHER" id="PTHR31846">
    <property type="entry name" value="CRS1 / YHBY (CRM) DOMAIN-CONTAINING PROTEIN"/>
    <property type="match status" value="1"/>
</dbReference>
<dbReference type="Pfam" id="PF01985">
    <property type="entry name" value="CRS1_YhbY"/>
    <property type="match status" value="3"/>
</dbReference>
<dbReference type="SMART" id="SM01103">
    <property type="entry name" value="CRS1_YhbY"/>
    <property type="match status" value="3"/>
</dbReference>
<dbReference type="SUPFAM" id="SSF75471">
    <property type="entry name" value="YhbY-like"/>
    <property type="match status" value="3"/>
</dbReference>
<dbReference type="PROSITE" id="PS51295">
    <property type="entry name" value="CRM"/>
    <property type="match status" value="3"/>
</dbReference>
<keyword id="KW-0150">Chloroplast</keyword>
<keyword id="KW-0175">Coiled coil</keyword>
<keyword id="KW-0507">mRNA processing</keyword>
<keyword id="KW-0508">mRNA splicing</keyword>
<keyword id="KW-0934">Plastid</keyword>
<keyword id="KW-1185">Reference proteome</keyword>
<keyword id="KW-0677">Repeat</keyword>
<keyword id="KW-0687">Ribonucleoprotein</keyword>
<keyword id="KW-0694">RNA-binding</keyword>
<keyword id="KW-0809">Transit peptide</keyword>
<comment type="function">
    <text evidence="5 6">Binds specific group II introns in chloroplasts and facilitates their splicing (PubMed:18799595, PubMed:32143506). Exhibits non-specific action during plastid rRNA biogenesis; RFC3 prevents unaccurate splicing to improve the accuracy of plastid rRNA processing (PubMed:32143506). Acts on subgroup IIB introns (PubMed:18799595). The substrates of the subgroup IIB also require the CRM domain proteins CAF1 or CAF2, with a simultaneous binding of CFM3B and CAF1 or CAF2 (PubMed:18799595). Required for seed development (PubMed:18799595).</text>
</comment>
<comment type="subunit">
    <text evidence="1 6">Interacts with RNA (By similarity). Part of large ribonucleo-protein particles that contain CAF1 and/or CAF2, and RNC1 (By similarity). Interacts with RFC3 in plastids (PubMed:32143506).</text>
</comment>
<comment type="subcellular location">
    <subcellularLocation>
        <location evidence="5">Plastid</location>
        <location evidence="5">Chloroplast</location>
    </subcellularLocation>
    <subcellularLocation>
        <location evidence="6">Plastid</location>
    </subcellularLocation>
    <text evidence="6">Localized to root plastids.</text>
</comment>
<comment type="tissue specificity">
    <text evidence="6">Expressed at low levels in roots and shoots.</text>
</comment>
<comment type="disruption phenotype">
    <text evidence="5 6">No visible phenotype under normal growth conditions, but the seeds of the double mutant plants cfm3a-4 and cfm3b-2 fail to germinate (PubMed:18799595). The double mutant rfc3-2 sprt2-1 is rescued for primary and lateral root development, intracellular distributions of plastids in roots, as well as for plastid rRNA level compared to the single mutant rfc3-2 (PubMed:32143506).</text>
</comment>
<comment type="sequence caution" evidence="9">
    <conflict type="erroneous gene model prediction">
        <sequence resource="EMBL-CDS" id="CAB10230"/>
    </conflict>
</comment>
<comment type="sequence caution" evidence="9">
    <conflict type="erroneous gene model prediction">
        <sequence resource="EMBL-CDS" id="CAB78493"/>
    </conflict>
</comment>
<evidence type="ECO:0000250" key="1">
    <source>
        <dbReference type="UniProtKB" id="A7XN92"/>
    </source>
</evidence>
<evidence type="ECO:0000255" key="2"/>
<evidence type="ECO:0000255" key="3">
    <source>
        <dbReference type="PROSITE-ProRule" id="PRU00626"/>
    </source>
</evidence>
<evidence type="ECO:0000256" key="4">
    <source>
        <dbReference type="SAM" id="MobiDB-lite"/>
    </source>
</evidence>
<evidence type="ECO:0000269" key="5">
    <source>
    </source>
</evidence>
<evidence type="ECO:0000269" key="6">
    <source>
    </source>
</evidence>
<evidence type="ECO:0000303" key="7">
    <source>
    </source>
</evidence>
<evidence type="ECO:0000303" key="8">
    <source>
    </source>
</evidence>
<evidence type="ECO:0000305" key="9"/>
<evidence type="ECO:0000312" key="10">
    <source>
        <dbReference type="Araport" id="AT4G14510"/>
    </source>
</evidence>
<evidence type="ECO:0000312" key="11">
    <source>
        <dbReference type="EMBL" id="CAB10230.1"/>
    </source>
</evidence>
<gene>
    <name evidence="7" type="primary">CFM3B</name>
    <name evidence="8" type="synonym">SPRT2</name>
    <name evidence="10" type="ordered locus">At4g14510</name>
    <name evidence="11" type="ORF">dl3295c</name>
</gene>
<proteinExistence type="evidence at protein level"/>
<name>CFM3B_ARATH</name>
<reference key="1">
    <citation type="journal article" date="1998" name="Nature">
        <title>Analysis of 1.9 Mb of contiguous sequence from chromosome 4 of Arabidopsis thaliana.</title>
        <authorList>
            <person name="Bevan M."/>
            <person name="Bancroft I."/>
            <person name="Bent E."/>
            <person name="Love K."/>
            <person name="Goodman H.M."/>
            <person name="Dean C."/>
            <person name="Bergkamp R."/>
            <person name="Dirkse W."/>
            <person name="van Staveren M."/>
            <person name="Stiekema W."/>
            <person name="Drost L."/>
            <person name="Ridley P."/>
            <person name="Hudson S.-A."/>
            <person name="Patel K."/>
            <person name="Murphy G."/>
            <person name="Piffanelli P."/>
            <person name="Wedler H."/>
            <person name="Wedler E."/>
            <person name="Wambutt R."/>
            <person name="Weitzenegger T."/>
            <person name="Pohl T."/>
            <person name="Terryn N."/>
            <person name="Gielen J."/>
            <person name="Villarroel R."/>
            <person name="De Clercq R."/>
            <person name="van Montagu M."/>
            <person name="Lecharny A."/>
            <person name="Aubourg S."/>
            <person name="Gy I."/>
            <person name="Kreis M."/>
            <person name="Lao N."/>
            <person name="Kavanagh T."/>
            <person name="Hempel S."/>
            <person name="Kotter P."/>
            <person name="Entian K.-D."/>
            <person name="Rieger M."/>
            <person name="Schaefer M."/>
            <person name="Funk B."/>
            <person name="Mueller-Auer S."/>
            <person name="Silvey M."/>
            <person name="James R."/>
            <person name="Monfort A."/>
            <person name="Pons A."/>
            <person name="Puigdomenech P."/>
            <person name="Douka A."/>
            <person name="Voukelatou E."/>
            <person name="Milioni D."/>
            <person name="Hatzopoulos P."/>
            <person name="Piravandi E."/>
            <person name="Obermaier B."/>
            <person name="Hilbert H."/>
            <person name="Duesterhoeft A."/>
            <person name="Moores T."/>
            <person name="Jones J.D.G."/>
            <person name="Eneva T."/>
            <person name="Palme K."/>
            <person name="Benes V."/>
            <person name="Rechmann S."/>
            <person name="Ansorge W."/>
            <person name="Cooke R."/>
            <person name="Berger C."/>
            <person name="Delseny M."/>
            <person name="Voet M."/>
            <person name="Volckaert G."/>
            <person name="Mewes H.-W."/>
            <person name="Klosterman S."/>
            <person name="Schueller C."/>
            <person name="Chalwatzis N."/>
        </authorList>
    </citation>
    <scope>NUCLEOTIDE SEQUENCE [LARGE SCALE GENOMIC DNA]</scope>
    <source>
        <strain>cv. Columbia</strain>
    </source>
</reference>
<reference key="2">
    <citation type="journal article" date="1999" name="Nature">
        <title>Sequence and analysis of chromosome 4 of the plant Arabidopsis thaliana.</title>
        <authorList>
            <person name="Mayer K.F.X."/>
            <person name="Schueller C."/>
            <person name="Wambutt R."/>
            <person name="Murphy G."/>
            <person name="Volckaert G."/>
            <person name="Pohl T."/>
            <person name="Duesterhoeft A."/>
            <person name="Stiekema W."/>
            <person name="Entian K.-D."/>
            <person name="Terryn N."/>
            <person name="Harris B."/>
            <person name="Ansorge W."/>
            <person name="Brandt P."/>
            <person name="Grivell L.A."/>
            <person name="Rieger M."/>
            <person name="Weichselgartner M."/>
            <person name="de Simone V."/>
            <person name="Obermaier B."/>
            <person name="Mache R."/>
            <person name="Mueller M."/>
            <person name="Kreis M."/>
            <person name="Delseny M."/>
            <person name="Puigdomenech P."/>
            <person name="Watson M."/>
            <person name="Schmidtheini T."/>
            <person name="Reichert B."/>
            <person name="Portetelle D."/>
            <person name="Perez-Alonso M."/>
            <person name="Boutry M."/>
            <person name="Bancroft I."/>
            <person name="Vos P."/>
            <person name="Hoheisel J."/>
            <person name="Zimmermann W."/>
            <person name="Wedler H."/>
            <person name="Ridley P."/>
            <person name="Langham S.-A."/>
            <person name="McCullagh B."/>
            <person name="Bilham L."/>
            <person name="Robben J."/>
            <person name="van der Schueren J."/>
            <person name="Grymonprez B."/>
            <person name="Chuang Y.-J."/>
            <person name="Vandenbussche F."/>
            <person name="Braeken M."/>
            <person name="Weltjens I."/>
            <person name="Voet M."/>
            <person name="Bastiaens I."/>
            <person name="Aert R."/>
            <person name="Defoor E."/>
            <person name="Weitzenegger T."/>
            <person name="Bothe G."/>
            <person name="Ramsperger U."/>
            <person name="Hilbert H."/>
            <person name="Braun M."/>
            <person name="Holzer E."/>
            <person name="Brandt A."/>
            <person name="Peters S."/>
            <person name="van Staveren M."/>
            <person name="Dirkse W."/>
            <person name="Mooijman P."/>
            <person name="Klein Lankhorst R."/>
            <person name="Rose M."/>
            <person name="Hauf J."/>
            <person name="Koetter P."/>
            <person name="Berneiser S."/>
            <person name="Hempel S."/>
            <person name="Feldpausch M."/>
            <person name="Lamberth S."/>
            <person name="Van den Daele H."/>
            <person name="De Keyser A."/>
            <person name="Buysshaert C."/>
            <person name="Gielen J."/>
            <person name="Villarroel R."/>
            <person name="De Clercq R."/>
            <person name="van Montagu M."/>
            <person name="Rogers J."/>
            <person name="Cronin A."/>
            <person name="Quail M.A."/>
            <person name="Bray-Allen S."/>
            <person name="Clark L."/>
            <person name="Doggett J."/>
            <person name="Hall S."/>
            <person name="Kay M."/>
            <person name="Lennard N."/>
            <person name="McLay K."/>
            <person name="Mayes R."/>
            <person name="Pettett A."/>
            <person name="Rajandream M.A."/>
            <person name="Lyne M."/>
            <person name="Benes V."/>
            <person name="Rechmann S."/>
            <person name="Borkova D."/>
            <person name="Bloecker H."/>
            <person name="Scharfe M."/>
            <person name="Grimm M."/>
            <person name="Loehnert T.-H."/>
            <person name="Dose S."/>
            <person name="de Haan M."/>
            <person name="Maarse A.C."/>
            <person name="Schaefer M."/>
            <person name="Mueller-Auer S."/>
            <person name="Gabel C."/>
            <person name="Fuchs M."/>
            <person name="Fartmann B."/>
            <person name="Granderath K."/>
            <person name="Dauner D."/>
            <person name="Herzl A."/>
            <person name="Neumann S."/>
            <person name="Argiriou A."/>
            <person name="Vitale D."/>
            <person name="Liguori R."/>
            <person name="Piravandi E."/>
            <person name="Massenet O."/>
            <person name="Quigley F."/>
            <person name="Clabauld G."/>
            <person name="Muendlein A."/>
            <person name="Felber R."/>
            <person name="Schnabl S."/>
            <person name="Hiller R."/>
            <person name="Schmidt W."/>
            <person name="Lecharny A."/>
            <person name="Aubourg S."/>
            <person name="Chefdor F."/>
            <person name="Cooke R."/>
            <person name="Berger C."/>
            <person name="Monfort A."/>
            <person name="Casacuberta E."/>
            <person name="Gibbons T."/>
            <person name="Weber N."/>
            <person name="Vandenbol M."/>
            <person name="Bargues M."/>
            <person name="Terol J."/>
            <person name="Torres A."/>
            <person name="Perez-Perez A."/>
            <person name="Purnelle B."/>
            <person name="Bent E."/>
            <person name="Johnson S."/>
            <person name="Tacon D."/>
            <person name="Jesse T."/>
            <person name="Heijnen L."/>
            <person name="Schwarz S."/>
            <person name="Scholler P."/>
            <person name="Heber S."/>
            <person name="Francs P."/>
            <person name="Bielke C."/>
            <person name="Frishman D."/>
            <person name="Haase D."/>
            <person name="Lemcke K."/>
            <person name="Mewes H.-W."/>
            <person name="Stocker S."/>
            <person name="Zaccaria P."/>
            <person name="Bevan M."/>
            <person name="Wilson R.K."/>
            <person name="de la Bastide M."/>
            <person name="Habermann K."/>
            <person name="Parnell L."/>
            <person name="Dedhia N."/>
            <person name="Gnoj L."/>
            <person name="Schutz K."/>
            <person name="Huang E."/>
            <person name="Spiegel L."/>
            <person name="Sekhon M."/>
            <person name="Murray J."/>
            <person name="Sheet P."/>
            <person name="Cordes M."/>
            <person name="Abu-Threideh J."/>
            <person name="Stoneking T."/>
            <person name="Kalicki J."/>
            <person name="Graves T."/>
            <person name="Harmon G."/>
            <person name="Edwards J."/>
            <person name="Latreille P."/>
            <person name="Courtney L."/>
            <person name="Cloud J."/>
            <person name="Abbott A."/>
            <person name="Scott K."/>
            <person name="Johnson D."/>
            <person name="Minx P."/>
            <person name="Bentley D."/>
            <person name="Fulton B."/>
            <person name="Miller N."/>
            <person name="Greco T."/>
            <person name="Kemp K."/>
            <person name="Kramer J."/>
            <person name="Fulton L."/>
            <person name="Mardis E."/>
            <person name="Dante M."/>
            <person name="Pepin K."/>
            <person name="Hillier L.W."/>
            <person name="Nelson J."/>
            <person name="Spieth J."/>
            <person name="Ryan E."/>
            <person name="Andrews S."/>
            <person name="Geisel C."/>
            <person name="Layman D."/>
            <person name="Du H."/>
            <person name="Ali J."/>
            <person name="Berghoff A."/>
            <person name="Jones K."/>
            <person name="Drone K."/>
            <person name="Cotton M."/>
            <person name="Joshu C."/>
            <person name="Antonoiu B."/>
            <person name="Zidanic M."/>
            <person name="Strong C."/>
            <person name="Sun H."/>
            <person name="Lamar B."/>
            <person name="Yordan C."/>
            <person name="Ma P."/>
            <person name="Zhong J."/>
            <person name="Preston R."/>
            <person name="Vil D."/>
            <person name="Shekher M."/>
            <person name="Matero A."/>
            <person name="Shah R."/>
            <person name="Swaby I.K."/>
            <person name="O'Shaughnessy A."/>
            <person name="Rodriguez M."/>
            <person name="Hoffman J."/>
            <person name="Till S."/>
            <person name="Granat S."/>
            <person name="Shohdy N."/>
            <person name="Hasegawa A."/>
            <person name="Hameed A."/>
            <person name="Lodhi M."/>
            <person name="Johnson A."/>
            <person name="Chen E."/>
            <person name="Marra M.A."/>
            <person name="Martienssen R."/>
            <person name="McCombie W.R."/>
        </authorList>
    </citation>
    <scope>NUCLEOTIDE SEQUENCE [LARGE SCALE GENOMIC DNA]</scope>
    <source>
        <strain>cv. Columbia</strain>
    </source>
</reference>
<reference key="3">
    <citation type="journal article" date="2017" name="Plant J.">
        <title>Araport11: a complete reannotation of the Arabidopsis thaliana reference genome.</title>
        <authorList>
            <person name="Cheng C.Y."/>
            <person name="Krishnakumar V."/>
            <person name="Chan A.P."/>
            <person name="Thibaud-Nissen F."/>
            <person name="Schobel S."/>
            <person name="Town C.D."/>
        </authorList>
    </citation>
    <scope>GENOME REANNOTATION</scope>
    <source>
        <strain>cv. Columbia</strain>
    </source>
</reference>
<reference key="4">
    <citation type="journal article" date="2008" name="RNA">
        <title>Two CRM protein subfamilies cooperate in the splicing of group IIB introns in chloroplasts.</title>
        <authorList>
            <person name="Asakura Y."/>
            <person name="Bayraktar O.A."/>
            <person name="Barkan A."/>
        </authorList>
    </citation>
    <scope>FUNCTION</scope>
    <scope>SUBCELLULAR LOCATION</scope>
    <scope>DISRUPTION PHENOTYPE</scope>
</reference>
<reference key="5">
    <citation type="journal article" date="2020" name="Plants (Basel)">
        <title>The bRPS6-family protein RFC3 prevents interference by the splicing factor CFM3b during plastid rRNA biogenesis in Arabidopsis thaliana.</title>
        <authorList>
            <person name="Nagashima Y."/>
            <person name="Ohshiro K."/>
            <person name="Iwase A."/>
            <person name="Nakata M.T."/>
            <person name="Maekawa S."/>
            <person name="Horiguchi G."/>
        </authorList>
    </citation>
    <scope>FUNCTION</scope>
    <scope>DISRUPTION PHENOTYPE</scope>
    <scope>INTERACTION WITH RFC3</scope>
    <scope>TISSUE SPECIFICITY</scope>
    <scope>SUBCELLULAR LOCATION</scope>
    <source>
        <strain>cv. Columbia</strain>
        <strain>cv. Landsberg erecta</strain>
    </source>
</reference>
<accession>F4JVH1</accession>
<accession>O23307</accession>
<feature type="transit peptide" description="Chloroplast" evidence="2">
    <location>
        <begin position="1"/>
        <end position="59"/>
    </location>
</feature>
<feature type="chain" id="PRO_0000435533" description="CRM-domain containing factor CFM3B, chloroplastic">
    <location>
        <begin position="60"/>
        <end position="907"/>
    </location>
</feature>
<feature type="domain" description="CRM 1" evidence="3">
    <location>
        <begin position="220"/>
        <end position="316"/>
    </location>
</feature>
<feature type="domain" description="CRM 2" evidence="3">
    <location>
        <begin position="421"/>
        <end position="518"/>
    </location>
</feature>
<feature type="domain" description="CRM 3" evidence="3">
    <location>
        <begin position="663"/>
        <end position="763"/>
    </location>
</feature>
<feature type="region of interest" description="Disordered" evidence="4">
    <location>
        <begin position="62"/>
        <end position="89"/>
    </location>
</feature>
<feature type="region of interest" description="Disordered" evidence="4">
    <location>
        <begin position="101"/>
        <end position="123"/>
    </location>
</feature>
<feature type="region of interest" description="Disordered" evidence="4">
    <location>
        <begin position="824"/>
        <end position="907"/>
    </location>
</feature>
<feature type="coiled-coil region" evidence="2">
    <location>
        <begin position="621"/>
        <end position="654"/>
    </location>
</feature>
<feature type="compositionally biased region" description="Polar residues" evidence="4">
    <location>
        <begin position="70"/>
        <end position="84"/>
    </location>
</feature>
<feature type="compositionally biased region" description="Acidic residues" evidence="4">
    <location>
        <begin position="828"/>
        <end position="857"/>
    </location>
</feature>
<feature type="compositionally biased region" description="Acidic residues" evidence="4">
    <location>
        <begin position="868"/>
        <end position="881"/>
    </location>
</feature>
<feature type="compositionally biased region" description="Polar residues" evidence="4">
    <location>
        <begin position="882"/>
        <end position="897"/>
    </location>
</feature>
<organism>
    <name type="scientific">Arabidopsis thaliana</name>
    <name type="common">Mouse-ear cress</name>
    <dbReference type="NCBI Taxonomy" id="3702"/>
    <lineage>
        <taxon>Eukaryota</taxon>
        <taxon>Viridiplantae</taxon>
        <taxon>Streptophyta</taxon>
        <taxon>Embryophyta</taxon>
        <taxon>Tracheophyta</taxon>
        <taxon>Spermatophyta</taxon>
        <taxon>Magnoliopsida</taxon>
        <taxon>eudicotyledons</taxon>
        <taxon>Gunneridae</taxon>
        <taxon>Pentapetalae</taxon>
        <taxon>rosids</taxon>
        <taxon>malvids</taxon>
        <taxon>Brassicales</taxon>
        <taxon>Brassicaceae</taxon>
        <taxon>Camelineae</taxon>
        <taxon>Arabidopsis</taxon>
    </lineage>
</organism>